<accession>P60869</accession>
<accession>P71206</accession>
<accession>P75812</accession>
<organism>
    <name type="scientific">Escherichia coli (strain K12)</name>
    <dbReference type="NCBI Taxonomy" id="83333"/>
    <lineage>
        <taxon>Bacteria</taxon>
        <taxon>Pseudomonadati</taxon>
        <taxon>Pseudomonadota</taxon>
        <taxon>Gammaproteobacteria</taxon>
        <taxon>Enterobacterales</taxon>
        <taxon>Enterobacteriaceae</taxon>
        <taxon>Escherichia</taxon>
    </lineage>
</organism>
<name>YBJL_ECOLI</name>
<reference key="1">
    <citation type="journal article" date="1996" name="DNA Res.">
        <title>A 718-kb DNA sequence of the Escherichia coli K-12 genome corresponding to the 12.7-28.0 min region on the linkage map.</title>
        <authorList>
            <person name="Oshima T."/>
            <person name="Aiba H."/>
            <person name="Baba T."/>
            <person name="Fujita K."/>
            <person name="Hayashi K."/>
            <person name="Honjo A."/>
            <person name="Ikemoto K."/>
            <person name="Inada T."/>
            <person name="Itoh T."/>
            <person name="Kajihara M."/>
            <person name="Kanai K."/>
            <person name="Kashimoto K."/>
            <person name="Kimura S."/>
            <person name="Kitagawa M."/>
            <person name="Makino K."/>
            <person name="Masuda S."/>
            <person name="Miki T."/>
            <person name="Mizobuchi K."/>
            <person name="Mori H."/>
            <person name="Motomura K."/>
            <person name="Nakamura Y."/>
            <person name="Nashimoto H."/>
            <person name="Nishio Y."/>
            <person name="Saito N."/>
            <person name="Sampei G."/>
            <person name="Seki Y."/>
            <person name="Tagami H."/>
            <person name="Takemoto K."/>
            <person name="Wada C."/>
            <person name="Yamamoto Y."/>
            <person name="Yano M."/>
            <person name="Horiuchi T."/>
        </authorList>
    </citation>
    <scope>NUCLEOTIDE SEQUENCE [LARGE SCALE GENOMIC DNA]</scope>
    <source>
        <strain>K12 / W3110 / ATCC 27325 / DSM 5911</strain>
    </source>
</reference>
<reference key="2">
    <citation type="journal article" date="1997" name="Science">
        <title>The complete genome sequence of Escherichia coli K-12.</title>
        <authorList>
            <person name="Blattner F.R."/>
            <person name="Plunkett G. III"/>
            <person name="Bloch C.A."/>
            <person name="Perna N.T."/>
            <person name="Burland V."/>
            <person name="Riley M."/>
            <person name="Collado-Vides J."/>
            <person name="Glasner J.D."/>
            <person name="Rode C.K."/>
            <person name="Mayhew G.F."/>
            <person name="Gregor J."/>
            <person name="Davis N.W."/>
            <person name="Kirkpatrick H.A."/>
            <person name="Goeden M.A."/>
            <person name="Rose D.J."/>
            <person name="Mau B."/>
            <person name="Shao Y."/>
        </authorList>
    </citation>
    <scope>NUCLEOTIDE SEQUENCE [LARGE SCALE GENOMIC DNA]</scope>
    <source>
        <strain>K12 / MG1655 / ATCC 47076</strain>
    </source>
</reference>
<reference key="3">
    <citation type="journal article" date="2006" name="Mol. Syst. Biol.">
        <title>Highly accurate genome sequences of Escherichia coli K-12 strains MG1655 and W3110.</title>
        <authorList>
            <person name="Hayashi K."/>
            <person name="Morooka N."/>
            <person name="Yamamoto Y."/>
            <person name="Fujita K."/>
            <person name="Isono K."/>
            <person name="Choi S."/>
            <person name="Ohtsubo E."/>
            <person name="Baba T."/>
            <person name="Wanner B.L."/>
            <person name="Mori H."/>
            <person name="Horiuchi T."/>
        </authorList>
    </citation>
    <scope>NUCLEOTIDE SEQUENCE [LARGE SCALE GENOMIC DNA]</scope>
    <source>
        <strain>K12 / W3110 / ATCC 27325 / DSM 5911</strain>
    </source>
</reference>
<reference key="4">
    <citation type="journal article" date="1996" name="J. Bacteriol.">
        <title>Biochemical characterization of NfsA, the Escherichia coli major nitroreductase exhibiting a high amino acid sequence homology to Frp, a Vibrio harveyi flavin oxidoreductase.</title>
        <authorList>
            <person name="Zenno S."/>
            <person name="Koike H."/>
            <person name="Kumar A.N."/>
            <person name="Jayaraman R."/>
            <person name="Tanokura M."/>
            <person name="Saigo K."/>
        </authorList>
    </citation>
    <scope>NUCLEOTIDE SEQUENCE [GENOMIC DNA] OF 396-527</scope>
    <source>
        <strain>K12 / AB1157</strain>
    </source>
</reference>
<evidence type="ECO:0000255" key="1">
    <source>
        <dbReference type="HAMAP-Rule" id="MF_01015"/>
    </source>
</evidence>
<evidence type="ECO:0000305" key="2"/>
<protein>
    <recommendedName>
        <fullName evidence="1">Putative transport protein YbjL</fullName>
    </recommendedName>
</protein>
<dbReference type="EMBL" id="U00096">
    <property type="protein sequence ID" value="AAC73934.1"/>
    <property type="molecule type" value="Genomic_DNA"/>
</dbReference>
<dbReference type="EMBL" id="AP009048">
    <property type="protein sequence ID" value="BAA35551.1"/>
    <property type="molecule type" value="Genomic_DNA"/>
</dbReference>
<dbReference type="EMBL" id="D38308">
    <property type="protein sequence ID" value="BAA07424.1"/>
    <property type="molecule type" value="Genomic_DNA"/>
</dbReference>
<dbReference type="PIR" id="G64822">
    <property type="entry name" value="G64822"/>
</dbReference>
<dbReference type="RefSeq" id="NP_415368.1">
    <property type="nucleotide sequence ID" value="NC_000913.3"/>
</dbReference>
<dbReference type="RefSeq" id="WP_001024876.1">
    <property type="nucleotide sequence ID" value="NZ_STEB01000019.1"/>
</dbReference>
<dbReference type="SMR" id="P60869"/>
<dbReference type="BioGRID" id="4260759">
    <property type="interactions" value="141"/>
</dbReference>
<dbReference type="FunCoup" id="P60869">
    <property type="interactions" value="53"/>
</dbReference>
<dbReference type="STRING" id="511145.b0847"/>
<dbReference type="jPOST" id="P60869"/>
<dbReference type="PaxDb" id="511145-b0847"/>
<dbReference type="DNASU" id="945474"/>
<dbReference type="EnsemblBacteria" id="AAC73934">
    <property type="protein sequence ID" value="AAC73934"/>
    <property type="gene ID" value="b0847"/>
</dbReference>
<dbReference type="GeneID" id="945474"/>
<dbReference type="KEGG" id="ecj:JW0831"/>
<dbReference type="KEGG" id="eco:b0847"/>
<dbReference type="KEGG" id="ecoc:C3026_05290"/>
<dbReference type="PATRIC" id="fig|1411691.4.peg.1431"/>
<dbReference type="EchoBASE" id="EB3445"/>
<dbReference type="eggNOG" id="COG0569">
    <property type="taxonomic scope" value="Bacteria"/>
</dbReference>
<dbReference type="eggNOG" id="COG2985">
    <property type="taxonomic scope" value="Bacteria"/>
</dbReference>
<dbReference type="HOGENOM" id="CLU_035023_2_2_6"/>
<dbReference type="InParanoid" id="P60869"/>
<dbReference type="OMA" id="IHSQMAD"/>
<dbReference type="OrthoDB" id="5166626at2"/>
<dbReference type="PhylomeDB" id="P60869"/>
<dbReference type="BioCyc" id="EcoCyc:G6445-MONOMER"/>
<dbReference type="PRO" id="PR:P60869"/>
<dbReference type="Proteomes" id="UP000000625">
    <property type="component" value="Chromosome"/>
</dbReference>
<dbReference type="GO" id="GO:0005886">
    <property type="term" value="C:plasma membrane"/>
    <property type="evidence" value="ECO:0000314"/>
    <property type="project" value="EcoCyc"/>
</dbReference>
<dbReference type="GO" id="GO:0008324">
    <property type="term" value="F:monoatomic cation transmembrane transporter activity"/>
    <property type="evidence" value="ECO:0007669"/>
    <property type="project" value="InterPro"/>
</dbReference>
<dbReference type="GO" id="GO:0006813">
    <property type="term" value="P:potassium ion transport"/>
    <property type="evidence" value="ECO:0007669"/>
    <property type="project" value="InterPro"/>
</dbReference>
<dbReference type="FunFam" id="3.30.70.1450:FF:000003">
    <property type="entry name" value="Putative transport protein YbjL"/>
    <property type="match status" value="1"/>
</dbReference>
<dbReference type="Gene3D" id="3.30.70.1450">
    <property type="entry name" value="Regulator of K+ conductance, C-terminal domain"/>
    <property type="match status" value="2"/>
</dbReference>
<dbReference type="HAMAP" id="MF_01015">
    <property type="entry name" value="YbjL"/>
    <property type="match status" value="1"/>
</dbReference>
<dbReference type="InterPro" id="IPR050144">
    <property type="entry name" value="AAE_transporter"/>
</dbReference>
<dbReference type="InterPro" id="IPR006037">
    <property type="entry name" value="RCK_C"/>
</dbReference>
<dbReference type="InterPro" id="IPR036721">
    <property type="entry name" value="RCK_C_sf"/>
</dbReference>
<dbReference type="InterPro" id="IPR023017">
    <property type="entry name" value="Transp_YbjL_put"/>
</dbReference>
<dbReference type="InterPro" id="IPR006512">
    <property type="entry name" value="YidE_YbjL"/>
</dbReference>
<dbReference type="NCBIfam" id="NF003440">
    <property type="entry name" value="PRK04972.1"/>
    <property type="match status" value="1"/>
</dbReference>
<dbReference type="NCBIfam" id="TIGR01625">
    <property type="entry name" value="YidE_YbjL_dupl"/>
    <property type="match status" value="2"/>
</dbReference>
<dbReference type="PANTHER" id="PTHR30445">
    <property type="entry name" value="K(+)_H(+) ANTIPORTER SUBUNIT KHTT"/>
    <property type="match status" value="1"/>
</dbReference>
<dbReference type="PANTHER" id="PTHR30445:SF10">
    <property type="entry name" value="TRANSPORT PROTEIN YBJL-RELATED"/>
    <property type="match status" value="1"/>
</dbReference>
<dbReference type="Pfam" id="PF06826">
    <property type="entry name" value="Asp-Al_Ex"/>
    <property type="match status" value="2"/>
</dbReference>
<dbReference type="Pfam" id="PF02080">
    <property type="entry name" value="TrkA_C"/>
    <property type="match status" value="2"/>
</dbReference>
<dbReference type="SUPFAM" id="SSF116726">
    <property type="entry name" value="TrkA C-terminal domain-like"/>
    <property type="match status" value="2"/>
</dbReference>
<dbReference type="PROSITE" id="PS51202">
    <property type="entry name" value="RCK_C"/>
    <property type="match status" value="2"/>
</dbReference>
<feature type="chain" id="PRO_0000208782" description="Putative transport protein YbjL">
    <location>
        <begin position="1"/>
        <end position="561"/>
    </location>
</feature>
<feature type="transmembrane region" description="Helical" evidence="1">
    <location>
        <begin position="8"/>
        <end position="28"/>
    </location>
</feature>
<feature type="transmembrane region" description="Helical" evidence="1">
    <location>
        <begin position="32"/>
        <end position="52"/>
    </location>
</feature>
<feature type="transmembrane region" description="Helical" evidence="1">
    <location>
        <begin position="66"/>
        <end position="86"/>
    </location>
</feature>
<feature type="transmembrane region" description="Helical" evidence="1">
    <location>
        <begin position="94"/>
        <end position="114"/>
    </location>
</feature>
<feature type="transmembrane region" description="Helical" evidence="1">
    <location>
        <begin position="158"/>
        <end position="178"/>
    </location>
</feature>
<feature type="transmembrane region" description="Helical" evidence="1">
    <location>
        <begin position="383"/>
        <end position="403"/>
    </location>
</feature>
<feature type="transmembrane region" description="Helical" evidence="1">
    <location>
        <begin position="406"/>
        <end position="426"/>
    </location>
</feature>
<feature type="transmembrane region" description="Helical" evidence="1">
    <location>
        <begin position="451"/>
        <end position="471"/>
    </location>
</feature>
<feature type="transmembrane region" description="Helical" evidence="1">
    <location>
        <begin position="475"/>
        <end position="495"/>
    </location>
</feature>
<feature type="transmembrane region" description="Helical" evidence="1">
    <location>
        <begin position="540"/>
        <end position="560"/>
    </location>
</feature>
<feature type="domain" description="RCK C-terminal 1" evidence="1">
    <location>
        <begin position="200"/>
        <end position="288"/>
    </location>
</feature>
<feature type="domain" description="RCK C-terminal 2" evidence="1">
    <location>
        <begin position="292"/>
        <end position="373"/>
    </location>
</feature>
<feature type="sequence conflict" description="In Ref. 4; BAA07424." evidence="2" ref="4">
    <original>ISDTA</original>
    <variation>TLKCI</variation>
    <location>
        <begin position="522"/>
        <end position="526"/>
    </location>
</feature>
<proteinExistence type="inferred from homology"/>
<sequence length="561" mass="60351">MNINVAELLNGNYILLLFVVLALGLCLGKLRLGSIQLGNSIGVLVVSLLLGQQHFSINTDALNLGFMLFIFCVGVEAGPNFFSIFFRDGKNYLMLALVMVGSALVIALGLGKLFGWDIGLTAGMLAGSMTSTPVLVGAGDTLRHSGMESRQLSLALDNLSLGYALTYLIGLVSLIVGARYLPKLQHQDLQTSAQQIARERGLDTDANRKVYLPVIRAYRVGPELVAWTDGKNLRELGIYRQTGCYIERIRRNGILANPDGDAVLQMGDEIALVGYPDAHARLDPSFRNGKEVFDRDLLDMRIVTEEVVVKNHNAVGKRLAQLKLTDHGCFLNRVIRSQIEMPIDDNVVLNKGDVLQVSGDARRVKTIADRIGFISIHSQVTDLLAFCAFFVIGLMIGMITFQFSTFSFGMGNAAGLLFAGIMLGFMRANHPTFGYIPQGALSMVKEFGLMVFMAGVGLSAGSGINNGLGAIGGQMLIAGLIVSLVPVVICFLFGAYVLRMNRALLFGAMMGARTCAPAMEIISDTARSNIPALGYAGTYAIANVLLTLAGTIIVMVWPGLG</sequence>
<keyword id="KW-1003">Cell membrane</keyword>
<keyword id="KW-0472">Membrane</keyword>
<keyword id="KW-1185">Reference proteome</keyword>
<keyword id="KW-0677">Repeat</keyword>
<keyword id="KW-0812">Transmembrane</keyword>
<keyword id="KW-1133">Transmembrane helix</keyword>
<keyword id="KW-0813">Transport</keyword>
<gene>
    <name evidence="1" type="primary">ybjL</name>
    <name type="ordered locus">b0847</name>
    <name type="ordered locus">JW0831</name>
</gene>
<comment type="subcellular location">
    <subcellularLocation>
        <location evidence="1">Cell membrane</location>
        <topology evidence="1">Multi-pass membrane protein</topology>
    </subcellularLocation>
</comment>
<comment type="similarity">
    <text evidence="1">Belongs to the AAE transporter (TC 2.A.81) family. YbjL subfamily.</text>
</comment>